<dbReference type="EC" id="3.5.1.18" evidence="1"/>
<dbReference type="EMBL" id="AP008229">
    <property type="protein sequence ID" value="BAE68635.1"/>
    <property type="molecule type" value="Genomic_DNA"/>
</dbReference>
<dbReference type="RefSeq" id="WP_011408336.1">
    <property type="nucleotide sequence ID" value="NC_007705.1"/>
</dbReference>
<dbReference type="SMR" id="Q2P492"/>
<dbReference type="KEGG" id="xom:XOO1880"/>
<dbReference type="HOGENOM" id="CLU_021802_4_0_6"/>
<dbReference type="UniPathway" id="UPA00034">
    <property type="reaction ID" value="UER00021"/>
</dbReference>
<dbReference type="GO" id="GO:0008777">
    <property type="term" value="F:acetylornithine deacetylase activity"/>
    <property type="evidence" value="ECO:0007669"/>
    <property type="project" value="TreeGrafter"/>
</dbReference>
<dbReference type="GO" id="GO:0050897">
    <property type="term" value="F:cobalt ion binding"/>
    <property type="evidence" value="ECO:0007669"/>
    <property type="project" value="UniProtKB-UniRule"/>
</dbReference>
<dbReference type="GO" id="GO:0009014">
    <property type="term" value="F:succinyl-diaminopimelate desuccinylase activity"/>
    <property type="evidence" value="ECO:0007669"/>
    <property type="project" value="UniProtKB-UniRule"/>
</dbReference>
<dbReference type="GO" id="GO:0008270">
    <property type="term" value="F:zinc ion binding"/>
    <property type="evidence" value="ECO:0007669"/>
    <property type="project" value="UniProtKB-UniRule"/>
</dbReference>
<dbReference type="GO" id="GO:0019877">
    <property type="term" value="P:diaminopimelate biosynthetic process"/>
    <property type="evidence" value="ECO:0007669"/>
    <property type="project" value="UniProtKB-UniRule"/>
</dbReference>
<dbReference type="GO" id="GO:0006526">
    <property type="term" value="P:L-arginine biosynthetic process"/>
    <property type="evidence" value="ECO:0007669"/>
    <property type="project" value="TreeGrafter"/>
</dbReference>
<dbReference type="GO" id="GO:0009089">
    <property type="term" value="P:lysine biosynthetic process via diaminopimelate"/>
    <property type="evidence" value="ECO:0007669"/>
    <property type="project" value="UniProtKB-UniRule"/>
</dbReference>
<dbReference type="CDD" id="cd03891">
    <property type="entry name" value="M20_DapE_proteobac"/>
    <property type="match status" value="1"/>
</dbReference>
<dbReference type="FunFam" id="3.40.630.10:FF:000005">
    <property type="entry name" value="Succinyl-diaminopimelate desuccinylase"/>
    <property type="match status" value="1"/>
</dbReference>
<dbReference type="Gene3D" id="3.40.630.10">
    <property type="entry name" value="Zn peptidases"/>
    <property type="match status" value="2"/>
</dbReference>
<dbReference type="HAMAP" id="MF_01690">
    <property type="entry name" value="DapE"/>
    <property type="match status" value="1"/>
</dbReference>
<dbReference type="InterPro" id="IPR036264">
    <property type="entry name" value="Bact_exopeptidase_dim_dom"/>
</dbReference>
<dbReference type="InterPro" id="IPR005941">
    <property type="entry name" value="DapE_proteobac"/>
</dbReference>
<dbReference type="InterPro" id="IPR002933">
    <property type="entry name" value="Peptidase_M20"/>
</dbReference>
<dbReference type="InterPro" id="IPR011650">
    <property type="entry name" value="Peptidase_M20_dimer"/>
</dbReference>
<dbReference type="InterPro" id="IPR050072">
    <property type="entry name" value="Peptidase_M20A"/>
</dbReference>
<dbReference type="NCBIfam" id="TIGR01246">
    <property type="entry name" value="dapE_proteo"/>
    <property type="match status" value="1"/>
</dbReference>
<dbReference type="NCBIfam" id="NF009557">
    <property type="entry name" value="PRK13009.1"/>
    <property type="match status" value="1"/>
</dbReference>
<dbReference type="PANTHER" id="PTHR43808">
    <property type="entry name" value="ACETYLORNITHINE DEACETYLASE"/>
    <property type="match status" value="1"/>
</dbReference>
<dbReference type="PANTHER" id="PTHR43808:SF31">
    <property type="entry name" value="N-ACETYL-L-CITRULLINE DEACETYLASE"/>
    <property type="match status" value="1"/>
</dbReference>
<dbReference type="Pfam" id="PF07687">
    <property type="entry name" value="M20_dimer"/>
    <property type="match status" value="1"/>
</dbReference>
<dbReference type="Pfam" id="PF01546">
    <property type="entry name" value="Peptidase_M20"/>
    <property type="match status" value="1"/>
</dbReference>
<dbReference type="SUPFAM" id="SSF55031">
    <property type="entry name" value="Bacterial exopeptidase dimerisation domain"/>
    <property type="match status" value="1"/>
</dbReference>
<dbReference type="SUPFAM" id="SSF53187">
    <property type="entry name" value="Zn-dependent exopeptidases"/>
    <property type="match status" value="1"/>
</dbReference>
<protein>
    <recommendedName>
        <fullName evidence="1">Succinyl-diaminopimelate desuccinylase</fullName>
        <shortName evidence="1">SDAP desuccinylase</shortName>
        <ecNumber evidence="1">3.5.1.18</ecNumber>
    </recommendedName>
    <alternativeName>
        <fullName evidence="1">N-succinyl-LL-2,6-diaminoheptanedioate amidohydrolase</fullName>
    </alternativeName>
</protein>
<reference key="1">
    <citation type="journal article" date="2005" name="Jpn. Agric. Res. Q.">
        <title>Genome sequence of Xanthomonas oryzae pv. oryzae suggests contribution of large numbers of effector genes and insertion sequences to its race diversity.</title>
        <authorList>
            <person name="Ochiai H."/>
            <person name="Inoue Y."/>
            <person name="Takeya M."/>
            <person name="Sasaki A."/>
            <person name="Kaku H."/>
        </authorList>
    </citation>
    <scope>NUCLEOTIDE SEQUENCE [LARGE SCALE GENOMIC DNA]</scope>
    <source>
        <strain>MAFF 311018</strain>
    </source>
</reference>
<proteinExistence type="inferred from homology"/>
<sequence>MNDVLDLTCDLIARASVTPEDAGCQALLAGRLTAAGFACEHLRLGEVDNLWATHGSGAPVLVLLGHTDVVPPGPREAWTSDPFDPQIRDGVLYGRGVADMKGSVAAFVVAAEQFVAAHRAHAGTLAVLLTSDEEGDAIDGVRRVANLFLERGQAIDWCITGEPSSTERLGDLLRVGRRGSLSGTLTVKGVQGHVAYPHKARNPIHLAAPALAELVARQWDDGFESFPPTSLQVSNIHAGTGANNVIPGELQVAFNLRYTPHWDAPRLEAEITALLDRHALDYALRWHRSGEPFYTPEGRLRSVAREVLGAFAGAPPEESTGGGTSDARFIAPLGAQCIEVGPVNASIHQVDEHVRVADLQALPALYRTLIERLLIE</sequence>
<evidence type="ECO:0000255" key="1">
    <source>
        <dbReference type="HAMAP-Rule" id="MF_01690"/>
    </source>
</evidence>
<accession>Q2P492</accession>
<gene>
    <name evidence="1" type="primary">dapE</name>
    <name type="ordered locus">XOO1880</name>
</gene>
<organism>
    <name type="scientific">Xanthomonas oryzae pv. oryzae (strain MAFF 311018)</name>
    <dbReference type="NCBI Taxonomy" id="342109"/>
    <lineage>
        <taxon>Bacteria</taxon>
        <taxon>Pseudomonadati</taxon>
        <taxon>Pseudomonadota</taxon>
        <taxon>Gammaproteobacteria</taxon>
        <taxon>Lysobacterales</taxon>
        <taxon>Lysobacteraceae</taxon>
        <taxon>Xanthomonas</taxon>
    </lineage>
</organism>
<name>DAPE_XANOM</name>
<feature type="chain" id="PRO_0000375787" description="Succinyl-diaminopimelate desuccinylase">
    <location>
        <begin position="1"/>
        <end position="376"/>
    </location>
</feature>
<feature type="active site" evidence="1">
    <location>
        <position position="68"/>
    </location>
</feature>
<feature type="active site" description="Proton acceptor" evidence="1">
    <location>
        <position position="133"/>
    </location>
</feature>
<feature type="binding site" evidence="1">
    <location>
        <position position="66"/>
    </location>
    <ligand>
        <name>Zn(2+)</name>
        <dbReference type="ChEBI" id="CHEBI:29105"/>
        <label>1</label>
    </ligand>
</feature>
<feature type="binding site" evidence="1">
    <location>
        <position position="99"/>
    </location>
    <ligand>
        <name>Zn(2+)</name>
        <dbReference type="ChEBI" id="CHEBI:29105"/>
        <label>1</label>
    </ligand>
</feature>
<feature type="binding site" evidence="1">
    <location>
        <position position="99"/>
    </location>
    <ligand>
        <name>Zn(2+)</name>
        <dbReference type="ChEBI" id="CHEBI:29105"/>
        <label>2</label>
    </ligand>
</feature>
<feature type="binding site" evidence="1">
    <location>
        <position position="134"/>
    </location>
    <ligand>
        <name>Zn(2+)</name>
        <dbReference type="ChEBI" id="CHEBI:29105"/>
        <label>2</label>
    </ligand>
</feature>
<feature type="binding site" evidence="1">
    <location>
        <position position="162"/>
    </location>
    <ligand>
        <name>Zn(2+)</name>
        <dbReference type="ChEBI" id="CHEBI:29105"/>
        <label>1</label>
    </ligand>
</feature>
<feature type="binding site" evidence="1">
    <location>
        <position position="348"/>
    </location>
    <ligand>
        <name>Zn(2+)</name>
        <dbReference type="ChEBI" id="CHEBI:29105"/>
        <label>2</label>
    </ligand>
</feature>
<keyword id="KW-0028">Amino-acid biosynthesis</keyword>
<keyword id="KW-0170">Cobalt</keyword>
<keyword id="KW-0220">Diaminopimelate biosynthesis</keyword>
<keyword id="KW-0378">Hydrolase</keyword>
<keyword id="KW-0457">Lysine biosynthesis</keyword>
<keyword id="KW-0479">Metal-binding</keyword>
<keyword id="KW-0862">Zinc</keyword>
<comment type="function">
    <text evidence="1">Catalyzes the hydrolysis of N-succinyl-L,L-diaminopimelic acid (SDAP), forming succinate and LL-2,6-diaminopimelate (DAP), an intermediate involved in the bacterial biosynthesis of lysine and meso-diaminopimelic acid, an essential component of bacterial cell walls.</text>
</comment>
<comment type="catalytic activity">
    <reaction evidence="1">
        <text>N-succinyl-(2S,6S)-2,6-diaminopimelate + H2O = (2S,6S)-2,6-diaminopimelate + succinate</text>
        <dbReference type="Rhea" id="RHEA:22608"/>
        <dbReference type="ChEBI" id="CHEBI:15377"/>
        <dbReference type="ChEBI" id="CHEBI:30031"/>
        <dbReference type="ChEBI" id="CHEBI:57609"/>
        <dbReference type="ChEBI" id="CHEBI:58087"/>
        <dbReference type="EC" id="3.5.1.18"/>
    </reaction>
</comment>
<comment type="cofactor">
    <cofactor evidence="1">
        <name>Zn(2+)</name>
        <dbReference type="ChEBI" id="CHEBI:29105"/>
    </cofactor>
    <cofactor evidence="1">
        <name>Co(2+)</name>
        <dbReference type="ChEBI" id="CHEBI:48828"/>
    </cofactor>
    <text evidence="1">Binds 2 Zn(2+) or Co(2+) ions per subunit.</text>
</comment>
<comment type="pathway">
    <text evidence="1">Amino-acid biosynthesis; L-lysine biosynthesis via DAP pathway; LL-2,6-diaminopimelate from (S)-tetrahydrodipicolinate (succinylase route): step 3/3.</text>
</comment>
<comment type="subunit">
    <text evidence="1">Homodimer.</text>
</comment>
<comment type="similarity">
    <text evidence="1">Belongs to the peptidase M20A family. DapE subfamily.</text>
</comment>